<proteinExistence type="inferred from homology"/>
<reference key="1">
    <citation type="journal article" date="2015" name="Genome Announc.">
        <title>Complete genome sequence of Anaeromyxobacter sp. Fw109-5, an anaerobic, metal-reducing bacterium isolated from a contaminated subsurface environment.</title>
        <authorList>
            <person name="Hwang C."/>
            <person name="Copeland A."/>
            <person name="Lucas S."/>
            <person name="Lapidus A."/>
            <person name="Barry K."/>
            <person name="Glavina Del Rio T."/>
            <person name="Dalin E."/>
            <person name="Tice H."/>
            <person name="Pitluck S."/>
            <person name="Sims D."/>
            <person name="Brettin T."/>
            <person name="Bruce D.C."/>
            <person name="Detter J.C."/>
            <person name="Han C.S."/>
            <person name="Schmutz J."/>
            <person name="Larimer F.W."/>
            <person name="Land M.L."/>
            <person name="Hauser L.J."/>
            <person name="Kyrpides N."/>
            <person name="Lykidis A."/>
            <person name="Richardson P."/>
            <person name="Belieav A."/>
            <person name="Sanford R.A."/>
            <person name="Loeffler F.E."/>
            <person name="Fields M.W."/>
        </authorList>
    </citation>
    <scope>NUCLEOTIDE SEQUENCE [LARGE SCALE GENOMIC DNA]</scope>
    <source>
        <strain>Fw109-5</strain>
    </source>
</reference>
<comment type="function">
    <text evidence="1">This protein is one of the two subunits of integration host factor, a specific DNA-binding protein that functions in genetic recombination as well as in transcriptional and translational control.</text>
</comment>
<comment type="subunit">
    <text evidence="1">Heterodimer of an alpha and a beta chain.</text>
</comment>
<comment type="similarity">
    <text evidence="1">Belongs to the bacterial histone-like protein family.</text>
</comment>
<keyword id="KW-0233">DNA recombination</keyword>
<keyword id="KW-0238">DNA-binding</keyword>
<keyword id="KW-1185">Reference proteome</keyword>
<keyword id="KW-0804">Transcription</keyword>
<keyword id="KW-0805">Transcription regulation</keyword>
<keyword id="KW-0810">Translation regulation</keyword>
<evidence type="ECO:0000255" key="1">
    <source>
        <dbReference type="HAMAP-Rule" id="MF_00380"/>
    </source>
</evidence>
<organism>
    <name type="scientific">Anaeromyxobacter sp. (strain Fw109-5)</name>
    <dbReference type="NCBI Taxonomy" id="404589"/>
    <lineage>
        <taxon>Bacteria</taxon>
        <taxon>Pseudomonadati</taxon>
        <taxon>Myxococcota</taxon>
        <taxon>Myxococcia</taxon>
        <taxon>Myxococcales</taxon>
        <taxon>Cystobacterineae</taxon>
        <taxon>Anaeromyxobacteraceae</taxon>
        <taxon>Anaeromyxobacter</taxon>
    </lineage>
</organism>
<protein>
    <recommendedName>
        <fullName evidence="1">Integration host factor subunit alpha</fullName>
        <shortName evidence="1">IHF-alpha</shortName>
    </recommendedName>
</protein>
<name>IHFA_ANADF</name>
<gene>
    <name evidence="1" type="primary">ihfA</name>
    <name evidence="1" type="synonym">himA</name>
    <name type="ordered locus">Anae109_1886</name>
</gene>
<accession>A7HBJ3</accession>
<sequence length="99" mass="11198">MTKADIIESVYEKVGFSKKEAAEIVEMVFDTIKETLERGEKIKISGFGNFIVREKKSRVGRNPQTGEEIEISARRVLTFRPSQVLKNALNLSDMVQPPV</sequence>
<dbReference type="EMBL" id="CP000769">
    <property type="protein sequence ID" value="ABS26089.1"/>
    <property type="molecule type" value="Genomic_DNA"/>
</dbReference>
<dbReference type="RefSeq" id="WP_012096667.1">
    <property type="nucleotide sequence ID" value="NC_009675.1"/>
</dbReference>
<dbReference type="SMR" id="A7HBJ3"/>
<dbReference type="STRING" id="404589.Anae109_1886"/>
<dbReference type="KEGG" id="afw:Anae109_1886"/>
<dbReference type="eggNOG" id="COG0776">
    <property type="taxonomic scope" value="Bacteria"/>
</dbReference>
<dbReference type="HOGENOM" id="CLU_105066_1_3_7"/>
<dbReference type="OrthoDB" id="9797747at2"/>
<dbReference type="Proteomes" id="UP000006382">
    <property type="component" value="Chromosome"/>
</dbReference>
<dbReference type="GO" id="GO:0005829">
    <property type="term" value="C:cytosol"/>
    <property type="evidence" value="ECO:0007669"/>
    <property type="project" value="TreeGrafter"/>
</dbReference>
<dbReference type="GO" id="GO:0003677">
    <property type="term" value="F:DNA binding"/>
    <property type="evidence" value="ECO:0007669"/>
    <property type="project" value="UniProtKB-UniRule"/>
</dbReference>
<dbReference type="GO" id="GO:0030527">
    <property type="term" value="F:structural constituent of chromatin"/>
    <property type="evidence" value="ECO:0007669"/>
    <property type="project" value="InterPro"/>
</dbReference>
<dbReference type="GO" id="GO:0006310">
    <property type="term" value="P:DNA recombination"/>
    <property type="evidence" value="ECO:0007669"/>
    <property type="project" value="UniProtKB-UniRule"/>
</dbReference>
<dbReference type="GO" id="GO:0009893">
    <property type="term" value="P:positive regulation of metabolic process"/>
    <property type="evidence" value="ECO:0007669"/>
    <property type="project" value="UniProtKB-ARBA"/>
</dbReference>
<dbReference type="GO" id="GO:0006355">
    <property type="term" value="P:regulation of DNA-templated transcription"/>
    <property type="evidence" value="ECO:0007669"/>
    <property type="project" value="UniProtKB-UniRule"/>
</dbReference>
<dbReference type="GO" id="GO:0006417">
    <property type="term" value="P:regulation of translation"/>
    <property type="evidence" value="ECO:0007669"/>
    <property type="project" value="UniProtKB-UniRule"/>
</dbReference>
<dbReference type="CDD" id="cd13835">
    <property type="entry name" value="IHF_A"/>
    <property type="match status" value="1"/>
</dbReference>
<dbReference type="FunFam" id="4.10.520.10:FF:000010">
    <property type="entry name" value="Integration host factor subunit alpha"/>
    <property type="match status" value="1"/>
</dbReference>
<dbReference type="Gene3D" id="4.10.520.10">
    <property type="entry name" value="IHF-like DNA-binding proteins"/>
    <property type="match status" value="1"/>
</dbReference>
<dbReference type="HAMAP" id="MF_00380">
    <property type="entry name" value="IHF_alpha"/>
    <property type="match status" value="1"/>
</dbReference>
<dbReference type="InterPro" id="IPR000119">
    <property type="entry name" value="Hist_DNA-bd"/>
</dbReference>
<dbReference type="InterPro" id="IPR020816">
    <property type="entry name" value="Histone-like_DNA-bd_CS"/>
</dbReference>
<dbReference type="InterPro" id="IPR010992">
    <property type="entry name" value="IHF-like_DNA-bd_dom_sf"/>
</dbReference>
<dbReference type="InterPro" id="IPR005684">
    <property type="entry name" value="IHF_alpha"/>
</dbReference>
<dbReference type="NCBIfam" id="TIGR00987">
    <property type="entry name" value="himA"/>
    <property type="match status" value="1"/>
</dbReference>
<dbReference type="NCBIfam" id="NF001401">
    <property type="entry name" value="PRK00285.1"/>
    <property type="match status" value="1"/>
</dbReference>
<dbReference type="PANTHER" id="PTHR33175">
    <property type="entry name" value="DNA-BINDING PROTEIN HU"/>
    <property type="match status" value="1"/>
</dbReference>
<dbReference type="PANTHER" id="PTHR33175:SF2">
    <property type="entry name" value="INTEGRATION HOST FACTOR SUBUNIT ALPHA"/>
    <property type="match status" value="1"/>
</dbReference>
<dbReference type="Pfam" id="PF00216">
    <property type="entry name" value="Bac_DNA_binding"/>
    <property type="match status" value="1"/>
</dbReference>
<dbReference type="PRINTS" id="PR01727">
    <property type="entry name" value="DNABINDINGHU"/>
</dbReference>
<dbReference type="SMART" id="SM00411">
    <property type="entry name" value="BHL"/>
    <property type="match status" value="1"/>
</dbReference>
<dbReference type="SUPFAM" id="SSF47729">
    <property type="entry name" value="IHF-like DNA-binding proteins"/>
    <property type="match status" value="1"/>
</dbReference>
<dbReference type="PROSITE" id="PS00045">
    <property type="entry name" value="HISTONE_LIKE"/>
    <property type="match status" value="1"/>
</dbReference>
<feature type="chain" id="PRO_1000060532" description="Integration host factor subunit alpha">
    <location>
        <begin position="1"/>
        <end position="99"/>
    </location>
</feature>